<name>GBRG1_HUMAN</name>
<proteinExistence type="evidence at protein level"/>
<reference key="1">
    <citation type="journal article" date="2004" name="Nat. Genet.">
        <title>Complete sequencing and characterization of 21,243 full-length human cDNAs.</title>
        <authorList>
            <person name="Ota T."/>
            <person name="Suzuki Y."/>
            <person name="Nishikawa T."/>
            <person name="Otsuki T."/>
            <person name="Sugiyama T."/>
            <person name="Irie R."/>
            <person name="Wakamatsu A."/>
            <person name="Hayashi K."/>
            <person name="Sato H."/>
            <person name="Nagai K."/>
            <person name="Kimura K."/>
            <person name="Makita H."/>
            <person name="Sekine M."/>
            <person name="Obayashi M."/>
            <person name="Nishi T."/>
            <person name="Shibahara T."/>
            <person name="Tanaka T."/>
            <person name="Ishii S."/>
            <person name="Yamamoto J."/>
            <person name="Saito K."/>
            <person name="Kawai Y."/>
            <person name="Isono Y."/>
            <person name="Nakamura Y."/>
            <person name="Nagahari K."/>
            <person name="Murakami K."/>
            <person name="Yasuda T."/>
            <person name="Iwayanagi T."/>
            <person name="Wagatsuma M."/>
            <person name="Shiratori A."/>
            <person name="Sudo H."/>
            <person name="Hosoiri T."/>
            <person name="Kaku Y."/>
            <person name="Kodaira H."/>
            <person name="Kondo H."/>
            <person name="Sugawara M."/>
            <person name="Takahashi M."/>
            <person name="Kanda K."/>
            <person name="Yokoi T."/>
            <person name="Furuya T."/>
            <person name="Kikkawa E."/>
            <person name="Omura Y."/>
            <person name="Abe K."/>
            <person name="Kamihara K."/>
            <person name="Katsuta N."/>
            <person name="Sato K."/>
            <person name="Tanikawa M."/>
            <person name="Yamazaki M."/>
            <person name="Ninomiya K."/>
            <person name="Ishibashi T."/>
            <person name="Yamashita H."/>
            <person name="Murakawa K."/>
            <person name="Fujimori K."/>
            <person name="Tanai H."/>
            <person name="Kimata M."/>
            <person name="Watanabe M."/>
            <person name="Hiraoka S."/>
            <person name="Chiba Y."/>
            <person name="Ishida S."/>
            <person name="Ono Y."/>
            <person name="Takiguchi S."/>
            <person name="Watanabe S."/>
            <person name="Yosida M."/>
            <person name="Hotuta T."/>
            <person name="Kusano J."/>
            <person name="Kanehori K."/>
            <person name="Takahashi-Fujii A."/>
            <person name="Hara H."/>
            <person name="Tanase T.-O."/>
            <person name="Nomura Y."/>
            <person name="Togiya S."/>
            <person name="Komai F."/>
            <person name="Hara R."/>
            <person name="Takeuchi K."/>
            <person name="Arita M."/>
            <person name="Imose N."/>
            <person name="Musashino K."/>
            <person name="Yuuki H."/>
            <person name="Oshima A."/>
            <person name="Sasaki N."/>
            <person name="Aotsuka S."/>
            <person name="Yoshikawa Y."/>
            <person name="Matsunawa H."/>
            <person name="Ichihara T."/>
            <person name="Shiohata N."/>
            <person name="Sano S."/>
            <person name="Moriya S."/>
            <person name="Momiyama H."/>
            <person name="Satoh N."/>
            <person name="Takami S."/>
            <person name="Terashima Y."/>
            <person name="Suzuki O."/>
            <person name="Nakagawa S."/>
            <person name="Senoh A."/>
            <person name="Mizoguchi H."/>
            <person name="Goto Y."/>
            <person name="Shimizu F."/>
            <person name="Wakebe H."/>
            <person name="Hishigaki H."/>
            <person name="Watanabe T."/>
            <person name="Sugiyama A."/>
            <person name="Takemoto M."/>
            <person name="Kawakami B."/>
            <person name="Yamazaki M."/>
            <person name="Watanabe K."/>
            <person name="Kumagai A."/>
            <person name="Itakura S."/>
            <person name="Fukuzumi Y."/>
            <person name="Fujimori Y."/>
            <person name="Komiyama M."/>
            <person name="Tashiro H."/>
            <person name="Tanigami A."/>
            <person name="Fujiwara T."/>
            <person name="Ono T."/>
            <person name="Yamada K."/>
            <person name="Fujii Y."/>
            <person name="Ozaki K."/>
            <person name="Hirao M."/>
            <person name="Ohmori Y."/>
            <person name="Kawabata A."/>
            <person name="Hikiji T."/>
            <person name="Kobatake N."/>
            <person name="Inagaki H."/>
            <person name="Ikema Y."/>
            <person name="Okamoto S."/>
            <person name="Okitani R."/>
            <person name="Kawakami T."/>
            <person name="Noguchi S."/>
            <person name="Itoh T."/>
            <person name="Shigeta K."/>
            <person name="Senba T."/>
            <person name="Matsumura K."/>
            <person name="Nakajima Y."/>
            <person name="Mizuno T."/>
            <person name="Morinaga M."/>
            <person name="Sasaki M."/>
            <person name="Togashi T."/>
            <person name="Oyama M."/>
            <person name="Hata H."/>
            <person name="Watanabe M."/>
            <person name="Komatsu T."/>
            <person name="Mizushima-Sugano J."/>
            <person name="Satoh T."/>
            <person name="Shirai Y."/>
            <person name="Takahashi Y."/>
            <person name="Nakagawa K."/>
            <person name="Okumura K."/>
            <person name="Nagase T."/>
            <person name="Nomura N."/>
            <person name="Kikuchi H."/>
            <person name="Masuho Y."/>
            <person name="Yamashita R."/>
            <person name="Nakai K."/>
            <person name="Yada T."/>
            <person name="Nakamura Y."/>
            <person name="Ohara O."/>
            <person name="Isogai T."/>
            <person name="Sugano S."/>
        </authorList>
    </citation>
    <scope>NUCLEOTIDE SEQUENCE [LARGE SCALE MRNA]</scope>
    <source>
        <tissue>Brain</tissue>
    </source>
</reference>
<reference key="2">
    <citation type="journal article" date="2007" name="BMC Genomics">
        <title>The full-ORF clone resource of the German cDNA consortium.</title>
        <authorList>
            <person name="Bechtel S."/>
            <person name="Rosenfelder H."/>
            <person name="Duda A."/>
            <person name="Schmidt C.P."/>
            <person name="Ernst U."/>
            <person name="Wellenreuther R."/>
            <person name="Mehrle A."/>
            <person name="Schuster C."/>
            <person name="Bahr A."/>
            <person name="Bloecker H."/>
            <person name="Heubner D."/>
            <person name="Hoerlein A."/>
            <person name="Michel G."/>
            <person name="Wedler H."/>
            <person name="Koehrer K."/>
            <person name="Ottenwaelder B."/>
            <person name="Poustka A."/>
            <person name="Wiemann S."/>
            <person name="Schupp I."/>
        </authorList>
    </citation>
    <scope>NUCLEOTIDE SEQUENCE [LARGE SCALE MRNA]</scope>
    <source>
        <tissue>Amygdala</tissue>
    </source>
</reference>
<reference key="3">
    <citation type="submission" date="2005-07" db="EMBL/GenBank/DDBJ databases">
        <authorList>
            <person name="Mural R.J."/>
            <person name="Istrail S."/>
            <person name="Sutton G.G."/>
            <person name="Florea L."/>
            <person name="Halpern A.L."/>
            <person name="Mobarry C.M."/>
            <person name="Lippert R."/>
            <person name="Walenz B."/>
            <person name="Shatkay H."/>
            <person name="Dew I."/>
            <person name="Miller J.R."/>
            <person name="Flanigan M.J."/>
            <person name="Edwards N.J."/>
            <person name="Bolanos R."/>
            <person name="Fasulo D."/>
            <person name="Halldorsson B.V."/>
            <person name="Hannenhalli S."/>
            <person name="Turner R."/>
            <person name="Yooseph S."/>
            <person name="Lu F."/>
            <person name="Nusskern D.R."/>
            <person name="Shue B.C."/>
            <person name="Zheng X.H."/>
            <person name="Zhong F."/>
            <person name="Delcher A.L."/>
            <person name="Huson D.H."/>
            <person name="Kravitz S.A."/>
            <person name="Mouchard L."/>
            <person name="Reinert K."/>
            <person name="Remington K.A."/>
            <person name="Clark A.G."/>
            <person name="Waterman M.S."/>
            <person name="Eichler E.E."/>
            <person name="Adams M.D."/>
            <person name="Hunkapiller M.W."/>
            <person name="Myers E.W."/>
            <person name="Venter J.C."/>
        </authorList>
    </citation>
    <scope>NUCLEOTIDE SEQUENCE [LARGE SCALE GENOMIC DNA]</scope>
</reference>
<reference key="4">
    <citation type="journal article" date="2004" name="Genome Res.">
        <title>The status, quality, and expansion of the NIH full-length cDNA project: the Mammalian Gene Collection (MGC).</title>
        <authorList>
            <consortium name="The MGC Project Team"/>
        </authorList>
    </citation>
    <scope>NUCLEOTIDE SEQUENCE [LARGE SCALE MRNA]</scope>
    <scope>VARIANT GLU-403</scope>
    <source>
        <tissue>Brain</tissue>
    </source>
</reference>
<reference key="5">
    <citation type="journal article" date="1999" name="Proc. Natl. Acad. Sci. U.S.A.">
        <title>Theta, a novel gamma-aminobutyric acid type A receptor subunit.</title>
        <authorList>
            <person name="Bonnert T.P."/>
            <person name="McKernan R.M."/>
            <person name="Farrar S."/>
            <person name="le Bourdelles B."/>
            <person name="Heavens R.P."/>
            <person name="Smith D.W."/>
            <person name="Hewson L."/>
            <person name="Rigby M.R."/>
            <person name="Sirinathsinghji D.J.S."/>
            <person name="Brown N."/>
            <person name="Wafford K.A."/>
            <person name="Whiting P.J."/>
        </authorList>
    </citation>
    <scope>FUNCTION</scope>
    <scope>TRANSPORTER ACTIVITY</scope>
    <scope>INTERACTION WITH GABRA2; GABRB1 AND GABRQ</scope>
</reference>
<feature type="signal peptide" evidence="5">
    <location>
        <begin position="1"/>
        <end position="35"/>
    </location>
</feature>
<feature type="chain" id="PRO_0000000473" description="Gamma-aminobutyric acid receptor subunit gamma-1">
    <location>
        <begin position="36"/>
        <end position="465"/>
    </location>
</feature>
<feature type="topological domain" description="Extracellular" evidence="8">
    <location>
        <begin position="36"/>
        <end position="273"/>
    </location>
</feature>
<feature type="transmembrane region" description="Helical" evidence="5">
    <location>
        <begin position="274"/>
        <end position="294"/>
    </location>
</feature>
<feature type="topological domain" description="Cytoplasmic" evidence="8">
    <location>
        <begin position="295"/>
        <end position="300"/>
    </location>
</feature>
<feature type="transmembrane region" description="Helical" evidence="5">
    <location>
        <begin position="301"/>
        <end position="320"/>
    </location>
</feature>
<feature type="topological domain" description="Extracellular" evidence="8">
    <location>
        <begin position="321"/>
        <end position="328"/>
    </location>
</feature>
<feature type="transmembrane region" description="Helical" evidence="5">
    <location>
        <begin position="329"/>
        <end position="349"/>
    </location>
</feature>
<feature type="topological domain" description="Cytoplasmic" evidence="8">
    <location>
        <begin position="350"/>
        <end position="444"/>
    </location>
</feature>
<feature type="transmembrane region" description="Helical" evidence="5">
    <location>
        <begin position="445"/>
        <end position="465"/>
    </location>
</feature>
<feature type="glycosylation site" description="N-linked (GlcNAc...) asparagine" evidence="5">
    <location>
        <position position="50"/>
    </location>
</feature>
<feature type="glycosylation site" description="N-linked (GlcNAc...) asparagine" evidence="5">
    <location>
        <position position="127"/>
    </location>
</feature>
<feature type="glycosylation site" description="N-linked (GlcNAc...) asparagine" evidence="5">
    <location>
        <position position="245"/>
    </location>
</feature>
<feature type="disulfide bond" evidence="4">
    <location>
        <begin position="188"/>
        <end position="202"/>
    </location>
</feature>
<feature type="sequence variant" id="VAR_047056" description="In dbSNP:rs17852913." evidence="7">
    <original>G</original>
    <variation>E</variation>
    <location>
        <position position="403"/>
    </location>
</feature>
<dbReference type="EMBL" id="AK122845">
    <property type="protein sequence ID" value="BAG53758.1"/>
    <property type="molecule type" value="mRNA"/>
</dbReference>
<dbReference type="EMBL" id="CR933628">
    <property type="protein sequence ID" value="CAI45936.1"/>
    <property type="molecule type" value="mRNA"/>
</dbReference>
<dbReference type="EMBL" id="CH471069">
    <property type="protein sequence ID" value="EAW93021.1"/>
    <property type="molecule type" value="Genomic_DNA"/>
</dbReference>
<dbReference type="EMBL" id="BC031087">
    <property type="protein sequence ID" value="AAH31087.1"/>
    <property type="molecule type" value="mRNA"/>
</dbReference>
<dbReference type="CCDS" id="CCDS3470.1"/>
<dbReference type="RefSeq" id="NP_775807.2">
    <property type="nucleotide sequence ID" value="NM_173536.3"/>
</dbReference>
<dbReference type="SMR" id="Q8N1C3"/>
<dbReference type="BioGRID" id="108839">
    <property type="interactions" value="3"/>
</dbReference>
<dbReference type="FunCoup" id="Q8N1C3">
    <property type="interactions" value="586"/>
</dbReference>
<dbReference type="IntAct" id="Q8N1C3">
    <property type="interactions" value="2"/>
</dbReference>
<dbReference type="STRING" id="9606.ENSP00000295452"/>
<dbReference type="BindingDB" id="Q8N1C3"/>
<dbReference type="ChEMBL" id="CHEMBL2093872"/>
<dbReference type="ChEMBL" id="CHEMBL2109243"/>
<dbReference type="DrugBank" id="DB12537">
    <property type="generic name" value="1,2-Benzodiazepine"/>
</dbReference>
<dbReference type="DrugBank" id="DB00546">
    <property type="generic name" value="Adinazolam"/>
</dbReference>
<dbReference type="DrugBank" id="DB06579">
    <property type="generic name" value="Adipiplon"/>
</dbReference>
<dbReference type="DrugBank" id="DB00404">
    <property type="generic name" value="Alprazolam"/>
</dbReference>
<dbReference type="DrugBank" id="DB00543">
    <property type="generic name" value="Amoxapine"/>
</dbReference>
<dbReference type="DrugBank" id="DB11901">
    <property type="generic name" value="Apalutamide"/>
</dbReference>
<dbReference type="DrugBank" id="DB14719">
    <property type="generic name" value="Bentazepam"/>
</dbReference>
<dbReference type="DrugBank" id="DB11859">
    <property type="generic name" value="Brexanolone"/>
</dbReference>
<dbReference type="DrugBank" id="DB01558">
    <property type="generic name" value="Bromazepam"/>
</dbReference>
<dbReference type="DrugBank" id="DB09017">
    <property type="generic name" value="Brotizolam"/>
</dbReference>
<dbReference type="DrugBank" id="DB00237">
    <property type="generic name" value="Butabarbital"/>
</dbReference>
<dbReference type="DrugBank" id="DB00241">
    <property type="generic name" value="Butalbital"/>
</dbReference>
<dbReference type="DrugBank" id="DB01489">
    <property type="generic name" value="Camazepam"/>
</dbReference>
<dbReference type="DrugBank" id="DB00475">
    <property type="generic name" value="Chlordiazepoxide"/>
</dbReference>
<dbReference type="DrugBank" id="DB14715">
    <property type="generic name" value="Cinazepam"/>
</dbReference>
<dbReference type="DrugBank" id="DB01594">
    <property type="generic name" value="Cinolazepam"/>
</dbReference>
<dbReference type="DrugBank" id="DB00349">
    <property type="generic name" value="Clobazam"/>
</dbReference>
<dbReference type="DrugBank" id="DB01068">
    <property type="generic name" value="Clonazepam"/>
</dbReference>
<dbReference type="DrugBank" id="DB00628">
    <property type="generic name" value="Clorazepic acid"/>
</dbReference>
<dbReference type="DrugBank" id="DB01559">
    <property type="generic name" value="Clotiazepam"/>
</dbReference>
<dbReference type="DrugBank" id="DB01553">
    <property type="generic name" value="Cloxazolam"/>
</dbReference>
<dbReference type="DrugBank" id="DB00363">
    <property type="generic name" value="Clozapine"/>
</dbReference>
<dbReference type="DrugBank" id="DB01511">
    <property type="generic name" value="Delorazepam"/>
</dbReference>
<dbReference type="DrugBank" id="DB01189">
    <property type="generic name" value="Desflurane"/>
</dbReference>
<dbReference type="DrugBank" id="DB00829">
    <property type="generic name" value="Diazepam"/>
</dbReference>
<dbReference type="DrugBank" id="DB13837">
    <property type="generic name" value="Doxefazepam"/>
</dbReference>
<dbReference type="DrugBank" id="DB00228">
    <property type="generic name" value="Enflurane"/>
</dbReference>
<dbReference type="DrugBank" id="DB01215">
    <property type="generic name" value="Estazolam"/>
</dbReference>
<dbReference type="DrugBank" id="DB00402">
    <property type="generic name" value="Eszopiclone"/>
</dbReference>
<dbReference type="DrugBank" id="DB00898">
    <property type="generic name" value="Ethanol"/>
</dbReference>
<dbReference type="DrugBank" id="DB00189">
    <property type="generic name" value="Ethchlorvynol"/>
</dbReference>
<dbReference type="DrugBank" id="DB01545">
    <property type="generic name" value="Ethyl loflazepate"/>
</dbReference>
<dbReference type="DrugBank" id="DB09166">
    <property type="generic name" value="Etizolam"/>
</dbReference>
<dbReference type="DrugBank" id="DB00292">
    <property type="generic name" value="Etomidate"/>
</dbReference>
<dbReference type="DrugBank" id="DB01567">
    <property type="generic name" value="Fludiazepam"/>
</dbReference>
<dbReference type="DrugBank" id="DB01205">
    <property type="generic name" value="Flumazenil"/>
</dbReference>
<dbReference type="DrugBank" id="DB01544">
    <property type="generic name" value="Flunitrazepam"/>
</dbReference>
<dbReference type="DrugBank" id="DB00690">
    <property type="generic name" value="Flurazepam"/>
</dbReference>
<dbReference type="DrugBank" id="DB05087">
    <property type="generic name" value="Ganaxolone"/>
</dbReference>
<dbReference type="DrugBank" id="DB01437">
    <property type="generic name" value="Glutethimide"/>
</dbReference>
<dbReference type="DrugBank" id="DB00801">
    <property type="generic name" value="Halazepam"/>
</dbReference>
<dbReference type="DrugBank" id="DB01159">
    <property type="generic name" value="Halothane"/>
</dbReference>
<dbReference type="DrugBank" id="DB00753">
    <property type="generic name" value="Isoflurane"/>
</dbReference>
<dbReference type="DrugBank" id="DB01587">
    <property type="generic name" value="Ketazolam"/>
</dbReference>
<dbReference type="DrugBank" id="DB00555">
    <property type="generic name" value="Lamotrigine"/>
</dbReference>
<dbReference type="DrugBank" id="DB13643">
    <property type="generic name" value="Loprazolam"/>
</dbReference>
<dbReference type="DrugBank" id="DB00186">
    <property type="generic name" value="Lorazepam"/>
</dbReference>
<dbReference type="DrugBank" id="DB13872">
    <property type="generic name" value="Lormetazepam"/>
</dbReference>
<dbReference type="DrugBank" id="DB13437">
    <property type="generic name" value="Medazepam"/>
</dbReference>
<dbReference type="DrugBank" id="DB00603">
    <property type="generic name" value="Medroxyprogesterone acetate"/>
</dbReference>
<dbReference type="DrugBank" id="DB01043">
    <property type="generic name" value="Memantine"/>
</dbReference>
<dbReference type="DrugBank" id="DB00371">
    <property type="generic name" value="Meprobamate"/>
</dbReference>
<dbReference type="DrugBank" id="DB00463">
    <property type="generic name" value="Metharbital"/>
</dbReference>
<dbReference type="DrugBank" id="DB01028">
    <property type="generic name" value="Methoxyflurane"/>
</dbReference>
<dbReference type="DrugBank" id="DB01107">
    <property type="generic name" value="Methyprylon"/>
</dbReference>
<dbReference type="DrugBank" id="DB15489">
    <property type="generic name" value="Mexazolam"/>
</dbReference>
<dbReference type="DrugBank" id="DB00683">
    <property type="generic name" value="Midazolam"/>
</dbReference>
<dbReference type="DrugBank" id="DB01595">
    <property type="generic name" value="Nitrazepam"/>
</dbReference>
<dbReference type="DrugBank" id="DB14028">
    <property type="generic name" value="Nordazepam"/>
</dbReference>
<dbReference type="DrugBank" id="DB00334">
    <property type="generic name" value="Olanzapine"/>
</dbReference>
<dbReference type="DrugBank" id="DB00842">
    <property type="generic name" value="Oxazepam"/>
</dbReference>
<dbReference type="DrugBank" id="DB14672">
    <property type="generic name" value="Oxazepam acetate"/>
</dbReference>
<dbReference type="DrugBank" id="DB00312">
    <property type="generic name" value="Pentobarbital"/>
</dbReference>
<dbReference type="DrugBank" id="DB00252">
    <property type="generic name" value="Phenytoin"/>
</dbReference>
<dbReference type="DrugBank" id="DB13335">
    <property type="generic name" value="Pinazepam"/>
</dbReference>
<dbReference type="DrugBank" id="DB01708">
    <property type="generic name" value="Prasterone"/>
</dbReference>
<dbReference type="DrugBank" id="DB01588">
    <property type="generic name" value="Prazepam"/>
</dbReference>
<dbReference type="DrugBank" id="DB00794">
    <property type="generic name" value="Primidone"/>
</dbReference>
<dbReference type="DrugBank" id="DB00818">
    <property type="generic name" value="Propofol"/>
</dbReference>
<dbReference type="DrugBank" id="DB01589">
    <property type="generic name" value="Quazepam"/>
</dbReference>
<dbReference type="DrugBank" id="DB12404">
    <property type="generic name" value="Remimazolam"/>
</dbReference>
<dbReference type="DrugBank" id="DB01236">
    <property type="generic name" value="Sevoflurane"/>
</dbReference>
<dbReference type="DrugBank" id="DB09118">
    <property type="generic name" value="Stiripentol"/>
</dbReference>
<dbReference type="DrugBank" id="DB00306">
    <property type="generic name" value="Talbutal"/>
</dbReference>
<dbReference type="DrugBank" id="DB01956">
    <property type="generic name" value="Taurine"/>
</dbReference>
<dbReference type="DrugBank" id="DB00231">
    <property type="generic name" value="Temazepam"/>
</dbReference>
<dbReference type="DrugBank" id="DB11582">
    <property type="generic name" value="Thiocolchicoside"/>
</dbReference>
<dbReference type="DrugBank" id="DB00897">
    <property type="generic name" value="Triazolam"/>
</dbReference>
<dbReference type="DrugBank" id="DB00909">
    <property type="generic name" value="Zonisamide"/>
</dbReference>
<dbReference type="DrugBank" id="DB15490">
    <property type="generic name" value="Zuranolone"/>
</dbReference>
<dbReference type="DrugCentral" id="Q8N1C3"/>
<dbReference type="GlyCosmos" id="Q8N1C3">
    <property type="glycosylation" value="3 sites, No reported glycans"/>
</dbReference>
<dbReference type="GlyGen" id="Q8N1C3">
    <property type="glycosylation" value="3 sites"/>
</dbReference>
<dbReference type="iPTMnet" id="Q8N1C3"/>
<dbReference type="PhosphoSitePlus" id="Q8N1C3"/>
<dbReference type="BioMuta" id="GABRG1"/>
<dbReference type="DMDM" id="209572630"/>
<dbReference type="jPOST" id="Q8N1C3"/>
<dbReference type="MassIVE" id="Q8N1C3"/>
<dbReference type="PaxDb" id="9606-ENSP00000295452"/>
<dbReference type="PeptideAtlas" id="Q8N1C3"/>
<dbReference type="ProteomicsDB" id="71585"/>
<dbReference type="Antibodypedia" id="23729">
    <property type="antibodies" value="138 antibodies from 27 providers"/>
</dbReference>
<dbReference type="DNASU" id="2565"/>
<dbReference type="Ensembl" id="ENST00000295452.5">
    <property type="protein sequence ID" value="ENSP00000295452.4"/>
    <property type="gene ID" value="ENSG00000163285.8"/>
</dbReference>
<dbReference type="GeneID" id="2565"/>
<dbReference type="KEGG" id="hsa:2565"/>
<dbReference type="MANE-Select" id="ENST00000295452.5">
    <property type="protein sequence ID" value="ENSP00000295452.4"/>
    <property type="RefSeq nucleotide sequence ID" value="NM_173536.4"/>
    <property type="RefSeq protein sequence ID" value="NP_775807.2"/>
</dbReference>
<dbReference type="UCSC" id="uc003gxb.4">
    <property type="organism name" value="human"/>
</dbReference>
<dbReference type="AGR" id="HGNC:4086"/>
<dbReference type="CTD" id="2565"/>
<dbReference type="DisGeNET" id="2565"/>
<dbReference type="GeneCards" id="GABRG1"/>
<dbReference type="HGNC" id="HGNC:4086">
    <property type="gene designation" value="GABRG1"/>
</dbReference>
<dbReference type="HPA" id="ENSG00000163285">
    <property type="expression patterns" value="Tissue enriched (brain)"/>
</dbReference>
<dbReference type="MalaCards" id="GABRG1"/>
<dbReference type="MIM" id="137166">
    <property type="type" value="gene"/>
</dbReference>
<dbReference type="neXtProt" id="NX_Q8N1C3"/>
<dbReference type="OpenTargets" id="ENSG00000163285"/>
<dbReference type="PharmGKB" id="PA28500"/>
<dbReference type="VEuPathDB" id="HostDB:ENSG00000163285"/>
<dbReference type="eggNOG" id="KOG3642">
    <property type="taxonomic scope" value="Eukaryota"/>
</dbReference>
<dbReference type="GeneTree" id="ENSGT00940000160193"/>
<dbReference type="HOGENOM" id="CLU_010920_2_0_1"/>
<dbReference type="InParanoid" id="Q8N1C3"/>
<dbReference type="OMA" id="MGSWEAF"/>
<dbReference type="OrthoDB" id="203862at2759"/>
<dbReference type="PAN-GO" id="Q8N1C3">
    <property type="GO annotations" value="19 GO annotations based on evolutionary models"/>
</dbReference>
<dbReference type="PhylomeDB" id="Q8N1C3"/>
<dbReference type="TreeFam" id="TF315453"/>
<dbReference type="PathwayCommons" id="Q8N1C3"/>
<dbReference type="SignaLink" id="Q8N1C3"/>
<dbReference type="BioGRID-ORCS" id="2565">
    <property type="hits" value="18 hits in 1169 CRISPR screens"/>
</dbReference>
<dbReference type="ChiTaRS" id="GABRG1">
    <property type="organism name" value="human"/>
</dbReference>
<dbReference type="GeneWiki" id="GABRG1"/>
<dbReference type="GenomeRNAi" id="2565"/>
<dbReference type="Pharos" id="Q8N1C3">
    <property type="development level" value="Tclin"/>
</dbReference>
<dbReference type="PRO" id="PR:Q8N1C3"/>
<dbReference type="Proteomes" id="UP000005640">
    <property type="component" value="Chromosome 4"/>
</dbReference>
<dbReference type="RNAct" id="Q8N1C3">
    <property type="molecule type" value="protein"/>
</dbReference>
<dbReference type="Bgee" id="ENSG00000163285">
    <property type="expression patterns" value="Expressed in medial globus pallidus and 62 other cell types or tissues"/>
</dbReference>
<dbReference type="GO" id="GO:0034707">
    <property type="term" value="C:chloride channel complex"/>
    <property type="evidence" value="ECO:0007669"/>
    <property type="project" value="UniProtKB-KW"/>
</dbReference>
<dbReference type="GO" id="GO:0032590">
    <property type="term" value="C:dendrite membrane"/>
    <property type="evidence" value="ECO:0000318"/>
    <property type="project" value="GO_Central"/>
</dbReference>
<dbReference type="GO" id="GO:1902711">
    <property type="term" value="C:GABA-A receptor complex"/>
    <property type="evidence" value="ECO:0000318"/>
    <property type="project" value="GO_Central"/>
</dbReference>
<dbReference type="GO" id="GO:0005886">
    <property type="term" value="C:plasma membrane"/>
    <property type="evidence" value="ECO:0000314"/>
    <property type="project" value="HPA"/>
</dbReference>
<dbReference type="GO" id="GO:0098794">
    <property type="term" value="C:postsynapse"/>
    <property type="evidence" value="ECO:0000318"/>
    <property type="project" value="GO_Central"/>
</dbReference>
<dbReference type="GO" id="GO:0045211">
    <property type="term" value="C:postsynaptic membrane"/>
    <property type="evidence" value="ECO:0007669"/>
    <property type="project" value="UniProtKB-SubCell"/>
</dbReference>
<dbReference type="GO" id="GO:0050811">
    <property type="term" value="F:GABA receptor binding"/>
    <property type="evidence" value="ECO:0007669"/>
    <property type="project" value="Ensembl"/>
</dbReference>
<dbReference type="GO" id="GO:0004890">
    <property type="term" value="F:GABA-A receptor activity"/>
    <property type="evidence" value="ECO:0007669"/>
    <property type="project" value="Ensembl"/>
</dbReference>
<dbReference type="GO" id="GO:0022851">
    <property type="term" value="F:GABA-gated chloride ion channel activity"/>
    <property type="evidence" value="ECO:0000318"/>
    <property type="project" value="GO_Central"/>
</dbReference>
<dbReference type="GO" id="GO:1902476">
    <property type="term" value="P:chloride transmembrane transport"/>
    <property type="evidence" value="ECO:0000318"/>
    <property type="project" value="GO_Central"/>
</dbReference>
<dbReference type="GO" id="GO:0007214">
    <property type="term" value="P:gamma-aminobutyric acid signaling pathway"/>
    <property type="evidence" value="ECO:0000318"/>
    <property type="project" value="GO_Central"/>
</dbReference>
<dbReference type="GO" id="GO:1904862">
    <property type="term" value="P:inhibitory synapse assembly"/>
    <property type="evidence" value="ECO:0000318"/>
    <property type="project" value="GO_Central"/>
</dbReference>
<dbReference type="GO" id="GO:0051932">
    <property type="term" value="P:synaptic transmission, GABAergic"/>
    <property type="evidence" value="ECO:0000318"/>
    <property type="project" value="GO_Central"/>
</dbReference>
<dbReference type="CDD" id="cd19000">
    <property type="entry name" value="LGIC_ECD_GABAAR_G"/>
    <property type="match status" value="1"/>
</dbReference>
<dbReference type="CDD" id="cd19054">
    <property type="entry name" value="LGIC_TM_GABAAR_gamma"/>
    <property type="match status" value="1"/>
</dbReference>
<dbReference type="FunFam" id="2.70.170.10:FF:000003">
    <property type="entry name" value="Putative gamma-aminobutyric acid receptor subunit gamma-2"/>
    <property type="match status" value="1"/>
</dbReference>
<dbReference type="Gene3D" id="2.70.170.10">
    <property type="entry name" value="Neurotransmitter-gated ion-channel ligand-binding domain"/>
    <property type="match status" value="1"/>
</dbReference>
<dbReference type="Gene3D" id="1.20.58.390">
    <property type="entry name" value="Neurotransmitter-gated ion-channel transmembrane domain"/>
    <property type="match status" value="1"/>
</dbReference>
<dbReference type="InterPro" id="IPR006028">
    <property type="entry name" value="GABAA/Glycine_rcpt"/>
</dbReference>
<dbReference type="InterPro" id="IPR005438">
    <property type="entry name" value="GABBAg1_rcpt"/>
</dbReference>
<dbReference type="InterPro" id="IPR005437">
    <property type="entry name" value="GABRG-1/4"/>
</dbReference>
<dbReference type="InterPro" id="IPR006202">
    <property type="entry name" value="Neur_chan_lig-bd"/>
</dbReference>
<dbReference type="InterPro" id="IPR036734">
    <property type="entry name" value="Neur_chan_lig-bd_sf"/>
</dbReference>
<dbReference type="InterPro" id="IPR006201">
    <property type="entry name" value="Neur_channel"/>
</dbReference>
<dbReference type="InterPro" id="IPR036719">
    <property type="entry name" value="Neuro-gated_channel_TM_sf"/>
</dbReference>
<dbReference type="InterPro" id="IPR038050">
    <property type="entry name" value="Neuro_actylchol_rec"/>
</dbReference>
<dbReference type="InterPro" id="IPR006029">
    <property type="entry name" value="Neurotrans-gated_channel_TM"/>
</dbReference>
<dbReference type="InterPro" id="IPR018000">
    <property type="entry name" value="Neurotransmitter_ion_chnl_CS"/>
</dbReference>
<dbReference type="NCBIfam" id="TIGR00860">
    <property type="entry name" value="LIC"/>
    <property type="match status" value="1"/>
</dbReference>
<dbReference type="PANTHER" id="PTHR18945">
    <property type="entry name" value="NEUROTRANSMITTER GATED ION CHANNEL"/>
    <property type="match status" value="1"/>
</dbReference>
<dbReference type="Pfam" id="PF02931">
    <property type="entry name" value="Neur_chan_LBD"/>
    <property type="match status" value="1"/>
</dbReference>
<dbReference type="Pfam" id="PF02932">
    <property type="entry name" value="Neur_chan_memb"/>
    <property type="match status" value="2"/>
</dbReference>
<dbReference type="PRINTS" id="PR00253">
    <property type="entry name" value="GABAARECEPTR"/>
</dbReference>
<dbReference type="PRINTS" id="PR01620">
    <property type="entry name" value="GABAARGAMMA"/>
</dbReference>
<dbReference type="PRINTS" id="PR01621">
    <property type="entry name" value="GABAARGAMMA1"/>
</dbReference>
<dbReference type="PRINTS" id="PR00252">
    <property type="entry name" value="NRIONCHANNEL"/>
</dbReference>
<dbReference type="SUPFAM" id="SSF90112">
    <property type="entry name" value="Neurotransmitter-gated ion-channel transmembrane pore"/>
    <property type="match status" value="1"/>
</dbReference>
<dbReference type="SUPFAM" id="SSF63712">
    <property type="entry name" value="Nicotinic receptor ligand binding domain-like"/>
    <property type="match status" value="1"/>
</dbReference>
<dbReference type="PROSITE" id="PS00236">
    <property type="entry name" value="NEUROTR_ION_CHANNEL"/>
    <property type="match status" value="1"/>
</dbReference>
<protein>
    <recommendedName>
        <fullName>Gamma-aminobutyric acid receptor subunit gamma-1</fullName>
    </recommendedName>
    <alternativeName>
        <fullName>GABA(A) receptor subunit gamma-1</fullName>
        <shortName>GABAAR subunit gamma-1</shortName>
    </alternativeName>
</protein>
<evidence type="ECO:0000250" key="1">
    <source>
        <dbReference type="UniProtKB" id="P08219"/>
    </source>
</evidence>
<evidence type="ECO:0000250" key="2">
    <source>
        <dbReference type="UniProtKB" id="P18507"/>
    </source>
</evidence>
<evidence type="ECO:0000250" key="3">
    <source>
        <dbReference type="UniProtKB" id="P22723"/>
    </source>
</evidence>
<evidence type="ECO:0000250" key="4">
    <source>
        <dbReference type="UniProtKB" id="P28472"/>
    </source>
</evidence>
<evidence type="ECO:0000255" key="5"/>
<evidence type="ECO:0000269" key="6">
    <source>
    </source>
</evidence>
<evidence type="ECO:0000269" key="7">
    <source>
    </source>
</evidence>
<evidence type="ECO:0000305" key="8"/>
<evidence type="ECO:0000312" key="9">
    <source>
        <dbReference type="HGNC" id="HGNC:4086"/>
    </source>
</evidence>
<comment type="function">
    <text evidence="1 2 6">Gamma subunit of the heteropentameric ligand-gated chloride channel gated by gamma-aminobutyric acid (GABA), a major inhibitory neurotransmitter in the brain (PubMed:10449790). GABA-gated chloride channels, also named GABA(A) receptors (GABAAR), consist of five subunits arranged around a central pore and contain GABA active binding site(s) located at the alpha and beta subunit interface(s) (By similarity). When activated by GABA, GABAARs selectively allow the flow of chloride anions across the cell membrane down their electrochemical gradient (PubMed:10449790). Chloride influx into the postsynaptic neuron following GABAAR opening decreases the neuron ability to generate a new action potential, thereby reducing nerve transmission (By similarity).</text>
</comment>
<comment type="catalytic activity">
    <reaction evidence="6">
        <text>chloride(in) = chloride(out)</text>
        <dbReference type="Rhea" id="RHEA:29823"/>
        <dbReference type="ChEBI" id="CHEBI:17996"/>
    </reaction>
</comment>
<comment type="subunit">
    <text evidence="6">Heteropentamer, formed by a combination of alpha (GABRA1-6), beta (GABRB1-3), gamma (GABRG1-3), delta (GABRD), epsilon (GABRE), rho (GABRR1-3), pi (GABRP) and theta (GABRQ) chains, each subunit exhibiting distinct physiological and pharmacological properties.</text>
</comment>
<comment type="interaction">
    <interactant intactId="EBI-21747962">
        <id>Q8N1C3</id>
    </interactant>
    <interactant intactId="EBI-748974">
        <id>Q96CV9</id>
        <label>OPTN</label>
    </interactant>
    <organismsDiffer>false</organismsDiffer>
    <experiments>3</experiments>
</comment>
<comment type="subcellular location">
    <subcellularLocation>
        <location>Postsynaptic cell membrane</location>
        <topology evidence="5">Multi-pass membrane protein</topology>
    </subcellularLocation>
    <subcellularLocation>
        <location>Cell membrane</location>
        <topology evidence="5">Multi-pass membrane protein</topology>
    </subcellularLocation>
</comment>
<comment type="domain">
    <text evidence="2">GABAARs subunits share a common topological structure: a peptide sequence made up of a long extracellular N-terminal, four transmembrane domains, intracellular or cytoplasmic domain located between the third and the fourth transmembrane domains.</text>
</comment>
<comment type="PTM">
    <text evidence="3">May be palmitoylated.</text>
</comment>
<comment type="similarity">
    <text evidence="8">Belongs to the ligand-gated ion channel (TC 1.A.9) family. Gamma-aminobutyric acid receptor (TC 1.A.9.5) subfamily. GABRG1 sub-subfamily.</text>
</comment>
<comment type="online information" name="Protein Spotlight">
    <link uri="https://www.proteinspotlight.org/back_issues/056"/>
    <text>Forbidden fruit - Issue 56 of March 2005</text>
</comment>
<accession>Q8N1C3</accession>
<accession>Q5H9T8</accession>
<keyword id="KW-1003">Cell membrane</keyword>
<keyword id="KW-0868">Chloride</keyword>
<keyword id="KW-0869">Chloride channel</keyword>
<keyword id="KW-1015">Disulfide bond</keyword>
<keyword id="KW-0325">Glycoprotein</keyword>
<keyword id="KW-0407">Ion channel</keyword>
<keyword id="KW-0406">Ion transport</keyword>
<keyword id="KW-0449">Lipoprotein</keyword>
<keyword id="KW-0472">Membrane</keyword>
<keyword id="KW-0564">Palmitate</keyword>
<keyword id="KW-0628">Postsynaptic cell membrane</keyword>
<keyword id="KW-1267">Proteomics identification</keyword>
<keyword id="KW-1185">Reference proteome</keyword>
<keyword id="KW-0732">Signal</keyword>
<keyword id="KW-0770">Synapse</keyword>
<keyword id="KW-0812">Transmembrane</keyword>
<keyword id="KW-1133">Transmembrane helix</keyword>
<keyword id="KW-0813">Transport</keyword>
<sequence>MGPLKAFLFSPFLLRSQSRGVRLVFLLLTLHLGNCVDKADDEDDEDLTVNKTWVLAPKIHEGDITQILNSLLQGYDNKLRPDIGVRPTVIETDVYVNSIGPVDPINMEYTIDIIFAQTWFDSRLKFNSTMKVLMLNSNMVGKIWIPDTFFRNSRKSDAHWITTPNRLLRIWNDGRVLYTLRLTINAECYLQLHNFPMDEHSCPLEFSSYGYPKNEIEYKWKKPSVEVADPKYWRLYQFAFVGLRNSTEITHTISGDYVIMTIFFDLSRRMGYFTIQTYIPCILTVVLSWVSFWINKDAVPARTSLGITTVLTMTTLSTIARKSLPKVSYVTAMDLFVSVCFIFVFAALMEYGTLHYFTSNQKGKTATKDRKLKNKASMTPGLHPGSTLIPMNNISVPQEDDYGYQCLEGKDCASFFCCFEDCRTGSWREGRIHIRIAKIDSYSRIFFPTAFALFNLVYWVGYLYL</sequence>
<organism>
    <name type="scientific">Homo sapiens</name>
    <name type="common">Human</name>
    <dbReference type="NCBI Taxonomy" id="9606"/>
    <lineage>
        <taxon>Eukaryota</taxon>
        <taxon>Metazoa</taxon>
        <taxon>Chordata</taxon>
        <taxon>Craniata</taxon>
        <taxon>Vertebrata</taxon>
        <taxon>Euteleostomi</taxon>
        <taxon>Mammalia</taxon>
        <taxon>Eutheria</taxon>
        <taxon>Euarchontoglires</taxon>
        <taxon>Primates</taxon>
        <taxon>Haplorrhini</taxon>
        <taxon>Catarrhini</taxon>
        <taxon>Hominidae</taxon>
        <taxon>Homo</taxon>
    </lineage>
</organism>
<gene>
    <name evidence="9" type="primary">GABRG1</name>
</gene>